<gene>
    <name evidence="1" type="primary">rplN</name>
    <name evidence="1" type="synonym">rpl14</name>
    <name type="ordered locus">HI_0788</name>
</gene>
<reference key="1">
    <citation type="journal article" date="1995" name="Science">
        <title>Whole-genome random sequencing and assembly of Haemophilus influenzae Rd.</title>
        <authorList>
            <person name="Fleischmann R.D."/>
            <person name="Adams M.D."/>
            <person name="White O."/>
            <person name="Clayton R.A."/>
            <person name="Kirkness E.F."/>
            <person name="Kerlavage A.R."/>
            <person name="Bult C.J."/>
            <person name="Tomb J.-F."/>
            <person name="Dougherty B.A."/>
            <person name="Merrick J.M."/>
            <person name="McKenney K."/>
            <person name="Sutton G.G."/>
            <person name="FitzHugh W."/>
            <person name="Fields C.A."/>
            <person name="Gocayne J.D."/>
            <person name="Scott J.D."/>
            <person name="Shirley R."/>
            <person name="Liu L.-I."/>
            <person name="Glodek A."/>
            <person name="Kelley J.M."/>
            <person name="Weidman J.F."/>
            <person name="Phillips C.A."/>
            <person name="Spriggs T."/>
            <person name="Hedblom E."/>
            <person name="Cotton M.D."/>
            <person name="Utterback T.R."/>
            <person name="Hanna M.C."/>
            <person name="Nguyen D.T."/>
            <person name="Saudek D.M."/>
            <person name="Brandon R.C."/>
            <person name="Fine L.D."/>
            <person name="Fritchman J.L."/>
            <person name="Fuhrmann J.L."/>
            <person name="Geoghagen N.S.M."/>
            <person name="Gnehm C.L."/>
            <person name="McDonald L.A."/>
            <person name="Small K.V."/>
            <person name="Fraser C.M."/>
            <person name="Smith H.O."/>
            <person name="Venter J.C."/>
        </authorList>
    </citation>
    <scope>NUCLEOTIDE SEQUENCE [LARGE SCALE GENOMIC DNA]</scope>
    <source>
        <strain>ATCC 51907 / DSM 11121 / KW20 / Rd</strain>
    </source>
</reference>
<evidence type="ECO:0000255" key="1">
    <source>
        <dbReference type="HAMAP-Rule" id="MF_01367"/>
    </source>
</evidence>
<evidence type="ECO:0000305" key="2"/>
<organism>
    <name type="scientific">Haemophilus influenzae (strain ATCC 51907 / DSM 11121 / KW20 / Rd)</name>
    <dbReference type="NCBI Taxonomy" id="71421"/>
    <lineage>
        <taxon>Bacteria</taxon>
        <taxon>Pseudomonadati</taxon>
        <taxon>Pseudomonadota</taxon>
        <taxon>Gammaproteobacteria</taxon>
        <taxon>Pasteurellales</taxon>
        <taxon>Pasteurellaceae</taxon>
        <taxon>Haemophilus</taxon>
    </lineage>
</organism>
<name>RL14_HAEIN</name>
<keyword id="KW-1185">Reference proteome</keyword>
<keyword id="KW-0687">Ribonucleoprotein</keyword>
<keyword id="KW-0689">Ribosomal protein</keyword>
<keyword id="KW-0694">RNA-binding</keyword>
<keyword id="KW-0699">rRNA-binding</keyword>
<comment type="function">
    <text evidence="1">Binds to 23S rRNA. Forms part of two intersubunit bridges in the 70S ribosome.</text>
</comment>
<comment type="subunit">
    <text evidence="1">Part of the 50S ribosomal subunit. Forms a cluster with proteins L3 and L19. In the 70S ribosome, L14 and L19 interact and together make contacts with the 16S rRNA in bridges B5 and B8.</text>
</comment>
<comment type="similarity">
    <text evidence="1">Belongs to the universal ribosomal protein uL14 family.</text>
</comment>
<sequence>MIQEQTMLDVADNSGARSVMCIKVLGGSHRRYAAIGDIIKITVKEAIPRGKVKKGDVLKAVVVRTKKGVRRPDGSVIRFDGNACVILNNNTEQPIGTRIFGPVTRELRSEKFMKIISLAPEVL</sequence>
<proteinExistence type="inferred from homology"/>
<accession>P66067</accession>
<accession>P44352</accession>
<dbReference type="EMBL" id="L42023">
    <property type="protein sequence ID" value="AAC22446.1"/>
    <property type="molecule type" value="Genomic_DNA"/>
</dbReference>
<dbReference type="PIR" id="F64093">
    <property type="entry name" value="F64093"/>
</dbReference>
<dbReference type="RefSeq" id="NP_438947.1">
    <property type="nucleotide sequence ID" value="NC_000907.1"/>
</dbReference>
<dbReference type="SMR" id="P66067"/>
<dbReference type="STRING" id="71421.HI_0788"/>
<dbReference type="EnsemblBacteria" id="AAC22446">
    <property type="protein sequence ID" value="AAC22446"/>
    <property type="gene ID" value="HI_0788"/>
</dbReference>
<dbReference type="KEGG" id="hin:HI_0788"/>
<dbReference type="PATRIC" id="fig|71421.8.peg.827"/>
<dbReference type="eggNOG" id="COG0093">
    <property type="taxonomic scope" value="Bacteria"/>
</dbReference>
<dbReference type="HOGENOM" id="CLU_095071_2_1_6"/>
<dbReference type="OrthoDB" id="9806379at2"/>
<dbReference type="PhylomeDB" id="P66067"/>
<dbReference type="BioCyc" id="HINF71421:G1GJ1-828-MONOMER"/>
<dbReference type="PRO" id="PR:P66067"/>
<dbReference type="Proteomes" id="UP000000579">
    <property type="component" value="Chromosome"/>
</dbReference>
<dbReference type="GO" id="GO:0022625">
    <property type="term" value="C:cytosolic large ribosomal subunit"/>
    <property type="evidence" value="ECO:0000318"/>
    <property type="project" value="GO_Central"/>
</dbReference>
<dbReference type="GO" id="GO:0070180">
    <property type="term" value="F:large ribosomal subunit rRNA binding"/>
    <property type="evidence" value="ECO:0000318"/>
    <property type="project" value="GO_Central"/>
</dbReference>
<dbReference type="GO" id="GO:0003735">
    <property type="term" value="F:structural constituent of ribosome"/>
    <property type="evidence" value="ECO:0000318"/>
    <property type="project" value="GO_Central"/>
</dbReference>
<dbReference type="GO" id="GO:0006412">
    <property type="term" value="P:translation"/>
    <property type="evidence" value="ECO:0007669"/>
    <property type="project" value="UniProtKB-UniRule"/>
</dbReference>
<dbReference type="CDD" id="cd00337">
    <property type="entry name" value="Ribosomal_uL14"/>
    <property type="match status" value="1"/>
</dbReference>
<dbReference type="FunFam" id="2.40.150.20:FF:000001">
    <property type="entry name" value="50S ribosomal protein L14"/>
    <property type="match status" value="1"/>
</dbReference>
<dbReference type="Gene3D" id="2.40.150.20">
    <property type="entry name" value="Ribosomal protein L14"/>
    <property type="match status" value="1"/>
</dbReference>
<dbReference type="HAMAP" id="MF_01367">
    <property type="entry name" value="Ribosomal_uL14"/>
    <property type="match status" value="1"/>
</dbReference>
<dbReference type="InterPro" id="IPR000218">
    <property type="entry name" value="Ribosomal_uL14"/>
</dbReference>
<dbReference type="InterPro" id="IPR005745">
    <property type="entry name" value="Ribosomal_uL14_bac-type"/>
</dbReference>
<dbReference type="InterPro" id="IPR019972">
    <property type="entry name" value="Ribosomal_uL14_CS"/>
</dbReference>
<dbReference type="InterPro" id="IPR036853">
    <property type="entry name" value="Ribosomal_uL14_sf"/>
</dbReference>
<dbReference type="NCBIfam" id="TIGR01067">
    <property type="entry name" value="rplN_bact"/>
    <property type="match status" value="1"/>
</dbReference>
<dbReference type="PANTHER" id="PTHR11761">
    <property type="entry name" value="50S/60S RIBOSOMAL PROTEIN L14/L23"/>
    <property type="match status" value="1"/>
</dbReference>
<dbReference type="PANTHER" id="PTHR11761:SF3">
    <property type="entry name" value="LARGE RIBOSOMAL SUBUNIT PROTEIN UL14M"/>
    <property type="match status" value="1"/>
</dbReference>
<dbReference type="Pfam" id="PF00238">
    <property type="entry name" value="Ribosomal_L14"/>
    <property type="match status" value="1"/>
</dbReference>
<dbReference type="SMART" id="SM01374">
    <property type="entry name" value="Ribosomal_L14"/>
    <property type="match status" value="1"/>
</dbReference>
<dbReference type="SUPFAM" id="SSF50193">
    <property type="entry name" value="Ribosomal protein L14"/>
    <property type="match status" value="1"/>
</dbReference>
<dbReference type="PROSITE" id="PS00049">
    <property type="entry name" value="RIBOSOMAL_L14"/>
    <property type="match status" value="1"/>
</dbReference>
<protein>
    <recommendedName>
        <fullName evidence="1">Large ribosomal subunit protein uL14</fullName>
    </recommendedName>
    <alternativeName>
        <fullName evidence="2">50S ribosomal protein L14</fullName>
    </alternativeName>
</protein>
<feature type="chain" id="PRO_0000128543" description="Large ribosomal subunit protein uL14">
    <location>
        <begin position="1"/>
        <end position="123"/>
    </location>
</feature>